<feature type="chain" id="PRO_0000440320" description="Aldehyde dehydrogenase mpl4">
    <location>
        <begin position="1"/>
        <end position="501"/>
    </location>
</feature>
<feature type="active site" evidence="4">
    <location>
        <position position="253"/>
    </location>
</feature>
<feature type="active site" evidence="5">
    <location>
        <position position="287"/>
    </location>
</feature>
<feature type="binding site" evidence="2">
    <location>
        <begin position="231"/>
        <end position="236"/>
    </location>
    <ligand>
        <name>NAD(+)</name>
        <dbReference type="ChEBI" id="CHEBI:57540"/>
    </ligand>
</feature>
<reference key="1">
    <citation type="journal article" date="2007" name="Appl. Environ. Microbiol.">
        <title>Identification and in vivo functional analysis by gene disruption of ctnA, an activator gene involved in citrinin biosynthesis in Monascus purpureus.</title>
        <authorList>
            <person name="Shimizu T."/>
            <person name="Kinoshita H."/>
            <person name="Nihira T."/>
        </authorList>
    </citation>
    <scope>NUCLEOTIDE SEQUENCE [GENOMIC DNA]</scope>
</reference>
<reference key="2">
    <citation type="journal article" date="2008" name="J. Agric. Food Chem.">
        <title>Exploring the distribution of citrinin biosynthesis related genes among Monascus species.</title>
        <authorList>
            <person name="Chen Y.P."/>
            <person name="Tseng C.P."/>
            <person name="Chien I.L."/>
            <person name="Wang W.Y."/>
            <person name="Liaw L.L."/>
            <person name="Yuan G.F."/>
        </authorList>
    </citation>
    <scope>FUNCTION</scope>
</reference>
<reference key="3">
    <citation type="journal article" date="2008" name="J. Biosci. Bioeng.">
        <title>Construction of a citrinin gene cluster expression system in heterologous Aspergillus oryzae.</title>
        <authorList>
            <person name="Sakai K."/>
            <person name="Kinoshita H."/>
            <person name="Shimizu T."/>
            <person name="Nihira T."/>
        </authorList>
    </citation>
    <scope>FUNCTION</scope>
</reference>
<reference key="4">
    <citation type="journal article" date="2017" name="Cell Chem. Biol.">
        <title>Functional and structural analysis of programmed C-methylation in the biosynthesis of the fungal polyketide citrinin.</title>
        <authorList>
            <person name="Storm P.A."/>
            <person name="Herbst D.A."/>
            <person name="Maier T."/>
            <person name="Townsend C.A."/>
        </authorList>
    </citation>
    <scope>FUNCTION</scope>
</reference>
<reference key="5">
    <citation type="journal article" date="2017" name="J. Biotechnol.">
        <title>Methylotrophic yeast Pichia pastoris as a chassis organism for polyketide synthesis via the full citrinin biosynthetic pathway.</title>
        <authorList>
            <person name="Xue Y."/>
            <person name="Kong C."/>
            <person name="Shen W."/>
            <person name="Bai C."/>
            <person name="Ren Y."/>
            <person name="Zhou X."/>
            <person name="Zhang Y."/>
            <person name="Cai M."/>
        </authorList>
    </citation>
    <scope>FUNCTION</scope>
    <scope>CATALYTIC ACTIVITY</scope>
    <scope>PATHWAY</scope>
</reference>
<dbReference type="EC" id="1.2.1.3" evidence="4"/>
<dbReference type="EMBL" id="AB243687">
    <property type="protein sequence ID" value="BAE95336.1"/>
    <property type="molecule type" value="Genomic_DNA"/>
</dbReference>
<dbReference type="SMR" id="Q1ERI2"/>
<dbReference type="OrthoDB" id="310895at2759"/>
<dbReference type="GO" id="GO:0004029">
    <property type="term" value="F:aldehyde dehydrogenase (NAD+) activity"/>
    <property type="evidence" value="ECO:0007669"/>
    <property type="project" value="UniProtKB-EC"/>
</dbReference>
<dbReference type="CDD" id="cd07078">
    <property type="entry name" value="ALDH"/>
    <property type="match status" value="1"/>
</dbReference>
<dbReference type="FunFam" id="3.40.309.10:FF:000012">
    <property type="entry name" value="Betaine aldehyde dehydrogenase"/>
    <property type="match status" value="1"/>
</dbReference>
<dbReference type="FunFam" id="3.40.605.10:FF:000007">
    <property type="entry name" value="NAD/NADP-dependent betaine aldehyde dehydrogenase"/>
    <property type="match status" value="1"/>
</dbReference>
<dbReference type="Gene3D" id="3.40.605.10">
    <property type="entry name" value="Aldehyde Dehydrogenase, Chain A, domain 1"/>
    <property type="match status" value="1"/>
</dbReference>
<dbReference type="Gene3D" id="3.40.309.10">
    <property type="entry name" value="Aldehyde Dehydrogenase, Chain A, domain 2"/>
    <property type="match status" value="1"/>
</dbReference>
<dbReference type="InterPro" id="IPR016161">
    <property type="entry name" value="Ald_DH/histidinol_DH"/>
</dbReference>
<dbReference type="InterPro" id="IPR016163">
    <property type="entry name" value="Ald_DH_C"/>
</dbReference>
<dbReference type="InterPro" id="IPR016160">
    <property type="entry name" value="Ald_DH_CS_CYS"/>
</dbReference>
<dbReference type="InterPro" id="IPR029510">
    <property type="entry name" value="Ald_DH_CS_GLU"/>
</dbReference>
<dbReference type="InterPro" id="IPR016162">
    <property type="entry name" value="Ald_DH_N"/>
</dbReference>
<dbReference type="InterPro" id="IPR015590">
    <property type="entry name" value="Aldehyde_DH_dom"/>
</dbReference>
<dbReference type="PANTHER" id="PTHR11699">
    <property type="entry name" value="ALDEHYDE DEHYDROGENASE-RELATED"/>
    <property type="match status" value="1"/>
</dbReference>
<dbReference type="Pfam" id="PF00171">
    <property type="entry name" value="Aldedh"/>
    <property type="match status" value="1"/>
</dbReference>
<dbReference type="SUPFAM" id="SSF53720">
    <property type="entry name" value="ALDH-like"/>
    <property type="match status" value="1"/>
</dbReference>
<dbReference type="PROSITE" id="PS00070">
    <property type="entry name" value="ALDEHYDE_DEHYDR_CYS"/>
    <property type="match status" value="1"/>
</dbReference>
<dbReference type="PROSITE" id="PS00687">
    <property type="entry name" value="ALDEHYDE_DEHYDR_GLU"/>
    <property type="match status" value="1"/>
</dbReference>
<gene>
    <name evidence="12" type="primary">mpl4</name>
    <name evidence="11" type="synonym">orf1</name>
</gene>
<organism>
    <name type="scientific">Monascus purpureus</name>
    <name type="common">Red mold</name>
    <name type="synonym">Monascus anka</name>
    <dbReference type="NCBI Taxonomy" id="5098"/>
    <lineage>
        <taxon>Eukaryota</taxon>
        <taxon>Fungi</taxon>
        <taxon>Dikarya</taxon>
        <taxon>Ascomycota</taxon>
        <taxon>Pezizomycotina</taxon>
        <taxon>Eurotiomycetes</taxon>
        <taxon>Eurotiomycetidae</taxon>
        <taxon>Eurotiales</taxon>
        <taxon>Aspergillaceae</taxon>
        <taxon>Monascus</taxon>
    </lineage>
</organism>
<proteinExistence type="evidence at protein level"/>
<accession>Q1ERI2</accession>
<keyword id="KW-0520">NAD</keyword>
<keyword id="KW-0560">Oxidoreductase</keyword>
<comment type="function">
    <text evidence="1 6 7 8 9 10">Aldehyde dehydrogenase; part of the gene cluster that mediates the biosynthesis of the mycotoxin citrinin, a hepato-nephrotoxic compound to humans due to inhibition of respiration complex III (PubMed:17586673, PubMed:19012408, PubMed:19111642, PubMed:27913218, PubMed:28238725). The pathway begins with the synthesis of a keto-aldehyde intermediate by the citrinin PKS (pksCT) from successive condensations of 4 malonyl-CoA units, presumably with a simple acetyl-CoA starter unit (PubMed:28238725). Release of the keto-aldehyde intermediate is consistent with the presence of the C-terminal reductive release domain (PubMed:28238725). Mp11 collaborates with pksCT by catalyzing the hydrolysis of ACP-bound acyl intermediates to free the ACP from stalled intermediates (By similarity). Mpl2 then catalyzes the oxidation of the C-12 methyl of the ketone intermediate to an alcohol intermediate which is further oxidized by the oxidoreductase mpl7 to produce a bisaldehyde intermediate (PubMed:27913218). The fourth catalytic step is catalyzed by the mpl4 aldehyde dehydrogenase (PubMed:27913218). The final transformation is the reduction of C-3 by mpl6 to provide the chemically stable citrinin nucleus (PubMed:27913218).</text>
</comment>
<comment type="catalytic activity">
    <reaction evidence="4">
        <text>an aldehyde + NAD(+) + H2O = a carboxylate + NADH + 2 H(+)</text>
        <dbReference type="Rhea" id="RHEA:16185"/>
        <dbReference type="ChEBI" id="CHEBI:15377"/>
        <dbReference type="ChEBI" id="CHEBI:15378"/>
        <dbReference type="ChEBI" id="CHEBI:17478"/>
        <dbReference type="ChEBI" id="CHEBI:29067"/>
        <dbReference type="ChEBI" id="CHEBI:57540"/>
        <dbReference type="ChEBI" id="CHEBI:57945"/>
        <dbReference type="EC" id="1.2.1.3"/>
    </reaction>
</comment>
<comment type="pathway">
    <text evidence="6">Mycotoxin biosynthesis.</text>
</comment>
<comment type="similarity">
    <text evidence="3">Belongs to the aldehyde dehydrogenase family.</text>
</comment>
<evidence type="ECO:0000250" key="1">
    <source>
        <dbReference type="UniProtKB" id="A0A161CKG1"/>
    </source>
</evidence>
<evidence type="ECO:0000250" key="2">
    <source>
        <dbReference type="UniProtKB" id="Q28399"/>
    </source>
</evidence>
<evidence type="ECO:0000255" key="3"/>
<evidence type="ECO:0000255" key="4">
    <source>
        <dbReference type="PROSITE-ProRule" id="PRU10007"/>
    </source>
</evidence>
<evidence type="ECO:0000255" key="5">
    <source>
        <dbReference type="PROSITE-ProRule" id="PRU10008"/>
    </source>
</evidence>
<evidence type="ECO:0000269" key="6">
    <source>
    </source>
</evidence>
<evidence type="ECO:0000269" key="7">
    <source>
    </source>
</evidence>
<evidence type="ECO:0000269" key="8">
    <source>
    </source>
</evidence>
<evidence type="ECO:0000269" key="9">
    <source>
    </source>
</evidence>
<evidence type="ECO:0000269" key="10">
    <source>
    </source>
</evidence>
<evidence type="ECO:0000303" key="11">
    <source>
    </source>
</evidence>
<evidence type="ECO:0000303" key="12">
    <source>
    </source>
</evidence>
<sequence>MAEAAARILEALPAVCEYRWSCKDASKRFTVVNPATGEPITVVQAGNLDTVQGAIQASHRAFESWRWKTRQERSLYLLQAADELQKHSHELAVLLCLENGKPVKDASFDVGFLVQVFRYFGSIVDKLPSEFFDQGSIYSSVIYEPHGVCVGILPFNWPPVHAGGKLAPCLAAGNTMVLKPGEQAPLTLMRIVEILQSVFPADVVQAVPGLGPEIPQALINHPLVKMVSLTGSTASGSQAAQTAAVTLTPTVLELGGKNAFVVFEDADLELVVRDAIDGAFFNKGESCTAASRILVHKDLYPTLVSRLTAAVKKLRTGDGLDETTHIGPVVSRERQQEVLSYIEQGKREGATLAAQGDPPTAGRLSGGFFVPPTLFTDVTADMTIAQREIFGPVVTVGSFETEEEAVKTVNSSQYGLFAGVYSSDFTRAMRVTRKLDVGVVLVNNYFRALLGTPFGGVKDSGYGREHWIGTLREWSRVKNVRFPSGLSPIPAWGGAVDVCKL</sequence>
<name>CITD_MONPU</name>
<protein>
    <recommendedName>
        <fullName evidence="12">Aldehyde dehydrogenase mpl4</fullName>
        <ecNumber evidence="4">1.2.1.3</ecNumber>
    </recommendedName>
    <alternativeName>
        <fullName evidence="12">Citrinin synthesis protein mpl4</fullName>
    </alternativeName>
</protein>